<dbReference type="EMBL" id="CP000725">
    <property type="protein sequence ID" value="ABV11074.1"/>
    <property type="molecule type" value="Genomic_DNA"/>
</dbReference>
<dbReference type="RefSeq" id="WP_012000536.1">
    <property type="nucleotide sequence ID" value="NC_009785.1"/>
</dbReference>
<dbReference type="SMR" id="A8AXA5"/>
<dbReference type="STRING" id="467705.SGO_1126"/>
<dbReference type="KEGG" id="sgo:SGO_1126"/>
<dbReference type="eggNOG" id="COG4974">
    <property type="taxonomic scope" value="Bacteria"/>
</dbReference>
<dbReference type="HOGENOM" id="CLU_027562_9_6_9"/>
<dbReference type="Proteomes" id="UP000001131">
    <property type="component" value="Chromosome"/>
</dbReference>
<dbReference type="GO" id="GO:0005737">
    <property type="term" value="C:cytoplasm"/>
    <property type="evidence" value="ECO:0007669"/>
    <property type="project" value="UniProtKB-SubCell"/>
</dbReference>
<dbReference type="GO" id="GO:0003677">
    <property type="term" value="F:DNA binding"/>
    <property type="evidence" value="ECO:0007669"/>
    <property type="project" value="UniProtKB-KW"/>
</dbReference>
<dbReference type="GO" id="GO:0009037">
    <property type="term" value="F:tyrosine-based site-specific recombinase activity"/>
    <property type="evidence" value="ECO:0007669"/>
    <property type="project" value="UniProtKB-UniRule"/>
</dbReference>
<dbReference type="GO" id="GO:0051301">
    <property type="term" value="P:cell division"/>
    <property type="evidence" value="ECO:0007669"/>
    <property type="project" value="UniProtKB-KW"/>
</dbReference>
<dbReference type="GO" id="GO:0007059">
    <property type="term" value="P:chromosome segregation"/>
    <property type="evidence" value="ECO:0007669"/>
    <property type="project" value="UniProtKB-UniRule"/>
</dbReference>
<dbReference type="GO" id="GO:0006310">
    <property type="term" value="P:DNA recombination"/>
    <property type="evidence" value="ECO:0007669"/>
    <property type="project" value="UniProtKB-UniRule"/>
</dbReference>
<dbReference type="Gene3D" id="1.10.150.130">
    <property type="match status" value="1"/>
</dbReference>
<dbReference type="Gene3D" id="1.10.443.10">
    <property type="entry name" value="Intergrase catalytic core"/>
    <property type="match status" value="1"/>
</dbReference>
<dbReference type="HAMAP" id="MF_01816">
    <property type="entry name" value="Recomb_XerS"/>
    <property type="match status" value="1"/>
</dbReference>
<dbReference type="InterPro" id="IPR044068">
    <property type="entry name" value="CB"/>
</dbReference>
<dbReference type="InterPro" id="IPR011010">
    <property type="entry name" value="DNA_brk_join_enz"/>
</dbReference>
<dbReference type="InterPro" id="IPR013762">
    <property type="entry name" value="Integrase-like_cat_sf"/>
</dbReference>
<dbReference type="InterPro" id="IPR002104">
    <property type="entry name" value="Integrase_catalytic"/>
</dbReference>
<dbReference type="InterPro" id="IPR010998">
    <property type="entry name" value="Integrase_recombinase_N"/>
</dbReference>
<dbReference type="InterPro" id="IPR004107">
    <property type="entry name" value="Integrase_SAM-like_N"/>
</dbReference>
<dbReference type="InterPro" id="IPR023670">
    <property type="entry name" value="Recomb_XerS"/>
</dbReference>
<dbReference type="InterPro" id="IPR050090">
    <property type="entry name" value="Tyrosine_recombinase_XerCD"/>
</dbReference>
<dbReference type="NCBIfam" id="NF003462">
    <property type="entry name" value="PRK05084.1"/>
    <property type="match status" value="1"/>
</dbReference>
<dbReference type="PANTHER" id="PTHR30349">
    <property type="entry name" value="PHAGE INTEGRASE-RELATED"/>
    <property type="match status" value="1"/>
</dbReference>
<dbReference type="PANTHER" id="PTHR30349:SF77">
    <property type="entry name" value="TYROSINE RECOMBINASE XERC"/>
    <property type="match status" value="1"/>
</dbReference>
<dbReference type="Pfam" id="PF02899">
    <property type="entry name" value="Phage_int_SAM_1"/>
    <property type="match status" value="1"/>
</dbReference>
<dbReference type="Pfam" id="PF00589">
    <property type="entry name" value="Phage_integrase"/>
    <property type="match status" value="1"/>
</dbReference>
<dbReference type="SUPFAM" id="SSF56349">
    <property type="entry name" value="DNA breaking-rejoining enzymes"/>
    <property type="match status" value="1"/>
</dbReference>
<dbReference type="PROSITE" id="PS51900">
    <property type="entry name" value="CB"/>
    <property type="match status" value="1"/>
</dbReference>
<dbReference type="PROSITE" id="PS51898">
    <property type="entry name" value="TYR_RECOMBINASE"/>
    <property type="match status" value="1"/>
</dbReference>
<evidence type="ECO:0000255" key="1">
    <source>
        <dbReference type="HAMAP-Rule" id="MF_01816"/>
    </source>
</evidence>
<evidence type="ECO:0000255" key="2">
    <source>
        <dbReference type="PROSITE-ProRule" id="PRU01246"/>
    </source>
</evidence>
<evidence type="ECO:0000255" key="3">
    <source>
        <dbReference type="PROSITE-ProRule" id="PRU01248"/>
    </source>
</evidence>
<gene>
    <name evidence="1" type="primary">xerS</name>
    <name type="ordered locus">SGO_1126</name>
</gene>
<name>XERS_STRGC</name>
<protein>
    <recommendedName>
        <fullName evidence="1">Tyrosine recombinase XerS</fullName>
    </recommendedName>
</protein>
<keyword id="KW-0131">Cell cycle</keyword>
<keyword id="KW-0132">Cell division</keyword>
<keyword id="KW-0159">Chromosome partition</keyword>
<keyword id="KW-0963">Cytoplasm</keyword>
<keyword id="KW-0229">DNA integration</keyword>
<keyword id="KW-0233">DNA recombination</keyword>
<keyword id="KW-0238">DNA-binding</keyword>
<keyword id="KW-1185">Reference proteome</keyword>
<accession>A8AXA5</accession>
<reference key="1">
    <citation type="journal article" date="2007" name="J. Bacteriol.">
        <title>Genome-wide transcriptional changes in Streptococcus gordonii in response to competence signaling peptide.</title>
        <authorList>
            <person name="Vickerman M.M."/>
            <person name="Iobst S."/>
            <person name="Jesionowski A.M."/>
            <person name="Gill S.R."/>
        </authorList>
    </citation>
    <scope>NUCLEOTIDE SEQUENCE [LARGE SCALE GENOMIC DNA]</scope>
    <source>
        <strain>Challis / ATCC 35105 / BCRC 15272 / CH1 / DL1 / V288</strain>
    </source>
</reference>
<sequence>MRRELLLERIDKLKATMPWYILEYYQSKLAVPYSFTTLYEYLKEYDRFFNWVLESGITNASHIAEIPLSVLENMTKKDMEAFILYLRERPLLNANTTQNGVSQTTINRTLSALSSLYKYLTEEVENEQGEPYFYRNVMKKVATKKKKETLAARAENIKQKLFLGDETEEFLQYIDREYPKKLSNRALSSFNKNKERDLAIIALLLASGVRLSEAVNLDLKDINLKMMVIEVTRKGGKRDSVNVAAFAKPYLEEYLSIRSKRYKAEKTDTAFFLTEYRGTPNRIDASSVEKMVAKYSEDFKVRVTPHKLRHTLATRLYDATKSQVLVSHQLGHASTQVTDLYTHIVNDEQKNALNKL</sequence>
<organism>
    <name type="scientific">Streptococcus gordonii (strain Challis / ATCC 35105 / BCRC 15272 / CH1 / DL1 / V288)</name>
    <dbReference type="NCBI Taxonomy" id="467705"/>
    <lineage>
        <taxon>Bacteria</taxon>
        <taxon>Bacillati</taxon>
        <taxon>Bacillota</taxon>
        <taxon>Bacilli</taxon>
        <taxon>Lactobacillales</taxon>
        <taxon>Streptococcaceae</taxon>
        <taxon>Streptococcus</taxon>
    </lineage>
</organism>
<feature type="chain" id="PRO_1000088328" description="Tyrosine recombinase XerS">
    <location>
        <begin position="1"/>
        <end position="356"/>
    </location>
</feature>
<feature type="domain" description="Core-binding (CB)" evidence="3">
    <location>
        <begin position="16"/>
        <end position="121"/>
    </location>
</feature>
<feature type="domain" description="Tyr recombinase" evidence="2">
    <location>
        <begin position="169"/>
        <end position="354"/>
    </location>
</feature>
<feature type="active site" evidence="1">
    <location>
        <position position="210"/>
    </location>
</feature>
<feature type="active site" evidence="1">
    <location>
        <position position="234"/>
    </location>
</feature>
<feature type="active site" evidence="1">
    <location>
        <position position="306"/>
    </location>
</feature>
<feature type="active site" evidence="1">
    <location>
        <position position="309"/>
    </location>
</feature>
<feature type="active site" evidence="1">
    <location>
        <position position="332"/>
    </location>
</feature>
<feature type="active site" description="O-(3'-phospho-DNA)-tyrosine intermediate" evidence="1">
    <location>
        <position position="341"/>
    </location>
</feature>
<proteinExistence type="inferred from homology"/>
<comment type="function">
    <text evidence="1">Site-specific tyrosine recombinase, which acts by catalyzing the cutting and rejoining of the recombining DNA molecules. Essential to convert dimers of the bacterial chromosome into monomers to permit their segregation at cell division.</text>
</comment>
<comment type="activity regulation">
    <text evidence="1">FtsK is required for recombination.</text>
</comment>
<comment type="subcellular location">
    <subcellularLocation>
        <location evidence="1">Cytoplasm</location>
    </subcellularLocation>
</comment>
<comment type="similarity">
    <text evidence="1">Belongs to the 'phage' integrase family. XerS subfamily.</text>
</comment>